<evidence type="ECO:0000255" key="1">
    <source>
        <dbReference type="HAMAP-Rule" id="MF_01310"/>
    </source>
</evidence>
<evidence type="ECO:0000305" key="2"/>
<accession>B3QBV6</accession>
<sequence>MAKDATRIRRRERKNIASGIAHVNSSFNNTTITITDAQGNAIAWSSAGTMGFKGSRKSTPYAAQVAAEDVAKKAQEHGMRTLEVEVAGPGSGRESALRALQAAGFTVTSIRDVTTIPHNGCRPRKRRRV</sequence>
<keyword id="KW-0687">Ribonucleoprotein</keyword>
<keyword id="KW-0689">Ribosomal protein</keyword>
<keyword id="KW-0694">RNA-binding</keyword>
<keyword id="KW-0699">rRNA-binding</keyword>
<proteinExistence type="inferred from homology"/>
<dbReference type="EMBL" id="CP001096">
    <property type="protein sequence ID" value="ACF02143.1"/>
    <property type="molecule type" value="Genomic_DNA"/>
</dbReference>
<dbReference type="RefSeq" id="WP_011158772.1">
    <property type="nucleotide sequence ID" value="NC_011004.1"/>
</dbReference>
<dbReference type="SMR" id="B3QBV6"/>
<dbReference type="GeneID" id="66894313"/>
<dbReference type="KEGG" id="rpt:Rpal_3643"/>
<dbReference type="HOGENOM" id="CLU_072439_5_0_5"/>
<dbReference type="OrthoDB" id="9806415at2"/>
<dbReference type="Proteomes" id="UP000001725">
    <property type="component" value="Chromosome"/>
</dbReference>
<dbReference type="GO" id="GO:1990904">
    <property type="term" value="C:ribonucleoprotein complex"/>
    <property type="evidence" value="ECO:0007669"/>
    <property type="project" value="UniProtKB-KW"/>
</dbReference>
<dbReference type="GO" id="GO:0005840">
    <property type="term" value="C:ribosome"/>
    <property type="evidence" value="ECO:0007669"/>
    <property type="project" value="UniProtKB-KW"/>
</dbReference>
<dbReference type="GO" id="GO:0019843">
    <property type="term" value="F:rRNA binding"/>
    <property type="evidence" value="ECO:0007669"/>
    <property type="project" value="UniProtKB-UniRule"/>
</dbReference>
<dbReference type="GO" id="GO:0003735">
    <property type="term" value="F:structural constituent of ribosome"/>
    <property type="evidence" value="ECO:0007669"/>
    <property type="project" value="InterPro"/>
</dbReference>
<dbReference type="GO" id="GO:0006412">
    <property type="term" value="P:translation"/>
    <property type="evidence" value="ECO:0007669"/>
    <property type="project" value="UniProtKB-UniRule"/>
</dbReference>
<dbReference type="FunFam" id="3.30.420.80:FF:000001">
    <property type="entry name" value="30S ribosomal protein S11"/>
    <property type="match status" value="1"/>
</dbReference>
<dbReference type="Gene3D" id="3.30.420.80">
    <property type="entry name" value="Ribosomal protein S11"/>
    <property type="match status" value="1"/>
</dbReference>
<dbReference type="HAMAP" id="MF_01310">
    <property type="entry name" value="Ribosomal_uS11"/>
    <property type="match status" value="1"/>
</dbReference>
<dbReference type="InterPro" id="IPR001971">
    <property type="entry name" value="Ribosomal_uS11"/>
</dbReference>
<dbReference type="InterPro" id="IPR019981">
    <property type="entry name" value="Ribosomal_uS11_bac-type"/>
</dbReference>
<dbReference type="InterPro" id="IPR036967">
    <property type="entry name" value="Ribosomal_uS11_sf"/>
</dbReference>
<dbReference type="NCBIfam" id="NF003698">
    <property type="entry name" value="PRK05309.1"/>
    <property type="match status" value="1"/>
</dbReference>
<dbReference type="NCBIfam" id="TIGR03632">
    <property type="entry name" value="uS11_bact"/>
    <property type="match status" value="1"/>
</dbReference>
<dbReference type="PANTHER" id="PTHR11759">
    <property type="entry name" value="40S RIBOSOMAL PROTEIN S14/30S RIBOSOMAL PROTEIN S11"/>
    <property type="match status" value="1"/>
</dbReference>
<dbReference type="Pfam" id="PF00411">
    <property type="entry name" value="Ribosomal_S11"/>
    <property type="match status" value="1"/>
</dbReference>
<dbReference type="PIRSF" id="PIRSF002131">
    <property type="entry name" value="Ribosomal_S11"/>
    <property type="match status" value="1"/>
</dbReference>
<dbReference type="SUPFAM" id="SSF53137">
    <property type="entry name" value="Translational machinery components"/>
    <property type="match status" value="1"/>
</dbReference>
<reference key="1">
    <citation type="submission" date="2008-05" db="EMBL/GenBank/DDBJ databases">
        <title>Complete sequence of Rhodopseudomonas palustris TIE-1.</title>
        <authorList>
            <consortium name="US DOE Joint Genome Institute"/>
            <person name="Lucas S."/>
            <person name="Copeland A."/>
            <person name="Lapidus A."/>
            <person name="Glavina del Rio T."/>
            <person name="Dalin E."/>
            <person name="Tice H."/>
            <person name="Pitluck S."/>
            <person name="Chain P."/>
            <person name="Malfatti S."/>
            <person name="Shin M."/>
            <person name="Vergez L."/>
            <person name="Lang D."/>
            <person name="Schmutz J."/>
            <person name="Larimer F."/>
            <person name="Land M."/>
            <person name="Hauser L."/>
            <person name="Kyrpides N."/>
            <person name="Mikhailova N."/>
            <person name="Emerson D."/>
            <person name="Newman D.K."/>
            <person name="Roden E."/>
            <person name="Richardson P."/>
        </authorList>
    </citation>
    <scope>NUCLEOTIDE SEQUENCE [LARGE SCALE GENOMIC DNA]</scope>
    <source>
        <strain>TIE-1</strain>
    </source>
</reference>
<name>RS11_RHOPT</name>
<organism>
    <name type="scientific">Rhodopseudomonas palustris (strain TIE-1)</name>
    <dbReference type="NCBI Taxonomy" id="395960"/>
    <lineage>
        <taxon>Bacteria</taxon>
        <taxon>Pseudomonadati</taxon>
        <taxon>Pseudomonadota</taxon>
        <taxon>Alphaproteobacteria</taxon>
        <taxon>Hyphomicrobiales</taxon>
        <taxon>Nitrobacteraceae</taxon>
        <taxon>Rhodopseudomonas</taxon>
    </lineage>
</organism>
<feature type="chain" id="PRO_1000141132" description="Small ribosomal subunit protein uS11">
    <location>
        <begin position="1"/>
        <end position="129"/>
    </location>
</feature>
<comment type="function">
    <text evidence="1">Located on the platform of the 30S subunit, it bridges several disparate RNA helices of the 16S rRNA. Forms part of the Shine-Dalgarno cleft in the 70S ribosome.</text>
</comment>
<comment type="subunit">
    <text evidence="1">Part of the 30S ribosomal subunit. Interacts with proteins S7 and S18. Binds to IF-3.</text>
</comment>
<comment type="similarity">
    <text evidence="1">Belongs to the universal ribosomal protein uS11 family.</text>
</comment>
<protein>
    <recommendedName>
        <fullName evidence="1">Small ribosomal subunit protein uS11</fullName>
    </recommendedName>
    <alternativeName>
        <fullName evidence="2">30S ribosomal protein S11</fullName>
    </alternativeName>
</protein>
<gene>
    <name evidence="1" type="primary">rpsK</name>
    <name type="ordered locus">Rpal_3643</name>
</gene>